<feature type="chain" id="PRO_0000109743" description="Glutamate 5-kinase">
    <location>
        <begin position="1"/>
        <end position="370"/>
    </location>
</feature>
<feature type="domain" description="PUA" evidence="1">
    <location>
        <begin position="278"/>
        <end position="356"/>
    </location>
</feature>
<feature type="binding site" evidence="1">
    <location>
        <position position="11"/>
    </location>
    <ligand>
        <name>ATP</name>
        <dbReference type="ChEBI" id="CHEBI:30616"/>
    </ligand>
</feature>
<feature type="binding site" evidence="1">
    <location>
        <position position="52"/>
    </location>
    <ligand>
        <name>substrate</name>
    </ligand>
</feature>
<feature type="binding site" evidence="1">
    <location>
        <position position="139"/>
    </location>
    <ligand>
        <name>substrate</name>
    </ligand>
</feature>
<feature type="binding site" evidence="1">
    <location>
        <position position="151"/>
    </location>
    <ligand>
        <name>substrate</name>
    </ligand>
</feature>
<feature type="binding site" evidence="1">
    <location>
        <begin position="171"/>
        <end position="172"/>
    </location>
    <ligand>
        <name>ATP</name>
        <dbReference type="ChEBI" id="CHEBI:30616"/>
    </ligand>
</feature>
<feature type="binding site" evidence="1">
    <location>
        <begin position="213"/>
        <end position="219"/>
    </location>
    <ligand>
        <name>ATP</name>
        <dbReference type="ChEBI" id="CHEBI:30616"/>
    </ligand>
</feature>
<protein>
    <recommendedName>
        <fullName evidence="1">Glutamate 5-kinase</fullName>
        <ecNumber evidence="1">2.7.2.11</ecNumber>
    </recommendedName>
    <alternativeName>
        <fullName evidence="1">Gamma-glutamyl kinase</fullName>
        <shortName evidence="1">GK</shortName>
    </alternativeName>
</protein>
<gene>
    <name evidence="1" type="primary">proB</name>
    <name type="ordered locus">syc1900_c</name>
</gene>
<comment type="function">
    <text evidence="1">Catalyzes the transfer of a phosphate group to glutamate to form L-glutamate 5-phosphate.</text>
</comment>
<comment type="catalytic activity">
    <reaction evidence="1">
        <text>L-glutamate + ATP = L-glutamyl 5-phosphate + ADP</text>
        <dbReference type="Rhea" id="RHEA:14877"/>
        <dbReference type="ChEBI" id="CHEBI:29985"/>
        <dbReference type="ChEBI" id="CHEBI:30616"/>
        <dbReference type="ChEBI" id="CHEBI:58274"/>
        <dbReference type="ChEBI" id="CHEBI:456216"/>
        <dbReference type="EC" id="2.7.2.11"/>
    </reaction>
</comment>
<comment type="pathway">
    <text evidence="1">Amino-acid biosynthesis; L-proline biosynthesis; L-glutamate 5-semialdehyde from L-glutamate: step 1/2.</text>
</comment>
<comment type="subcellular location">
    <subcellularLocation>
        <location evidence="1">Cytoplasm</location>
    </subcellularLocation>
</comment>
<comment type="similarity">
    <text evidence="1">Belongs to the glutamate 5-kinase family.</text>
</comment>
<evidence type="ECO:0000255" key="1">
    <source>
        <dbReference type="HAMAP-Rule" id="MF_00456"/>
    </source>
</evidence>
<dbReference type="EC" id="2.7.2.11" evidence="1"/>
<dbReference type="EMBL" id="AP008231">
    <property type="protein sequence ID" value="BAD80090.1"/>
    <property type="molecule type" value="Genomic_DNA"/>
</dbReference>
<dbReference type="SMR" id="Q5N0T0"/>
<dbReference type="KEGG" id="syc:syc1900_c"/>
<dbReference type="eggNOG" id="COG0263">
    <property type="taxonomic scope" value="Bacteria"/>
</dbReference>
<dbReference type="UniPathway" id="UPA00098">
    <property type="reaction ID" value="UER00359"/>
</dbReference>
<dbReference type="Proteomes" id="UP000001175">
    <property type="component" value="Chromosome"/>
</dbReference>
<dbReference type="GO" id="GO:0005829">
    <property type="term" value="C:cytosol"/>
    <property type="evidence" value="ECO:0007669"/>
    <property type="project" value="TreeGrafter"/>
</dbReference>
<dbReference type="GO" id="GO:0005524">
    <property type="term" value="F:ATP binding"/>
    <property type="evidence" value="ECO:0007669"/>
    <property type="project" value="UniProtKB-KW"/>
</dbReference>
<dbReference type="GO" id="GO:0004349">
    <property type="term" value="F:glutamate 5-kinase activity"/>
    <property type="evidence" value="ECO:0007669"/>
    <property type="project" value="UniProtKB-UniRule"/>
</dbReference>
<dbReference type="GO" id="GO:0003723">
    <property type="term" value="F:RNA binding"/>
    <property type="evidence" value="ECO:0007669"/>
    <property type="project" value="InterPro"/>
</dbReference>
<dbReference type="GO" id="GO:0055129">
    <property type="term" value="P:L-proline biosynthetic process"/>
    <property type="evidence" value="ECO:0007669"/>
    <property type="project" value="UniProtKB-UniRule"/>
</dbReference>
<dbReference type="CDD" id="cd04242">
    <property type="entry name" value="AAK_G5K_ProB"/>
    <property type="match status" value="1"/>
</dbReference>
<dbReference type="CDD" id="cd21157">
    <property type="entry name" value="PUA_G5K"/>
    <property type="match status" value="1"/>
</dbReference>
<dbReference type="FunFam" id="2.30.130.10:FF:000007">
    <property type="entry name" value="Glutamate 5-kinase"/>
    <property type="match status" value="1"/>
</dbReference>
<dbReference type="FunFam" id="3.40.1160.10:FF:000018">
    <property type="entry name" value="Glutamate 5-kinase"/>
    <property type="match status" value="1"/>
</dbReference>
<dbReference type="Gene3D" id="3.40.1160.10">
    <property type="entry name" value="Acetylglutamate kinase-like"/>
    <property type="match status" value="1"/>
</dbReference>
<dbReference type="Gene3D" id="2.30.130.10">
    <property type="entry name" value="PUA domain"/>
    <property type="match status" value="1"/>
</dbReference>
<dbReference type="HAMAP" id="MF_00456">
    <property type="entry name" value="ProB"/>
    <property type="match status" value="1"/>
</dbReference>
<dbReference type="InterPro" id="IPR036393">
    <property type="entry name" value="AceGlu_kinase-like_sf"/>
</dbReference>
<dbReference type="InterPro" id="IPR001048">
    <property type="entry name" value="Asp/Glu/Uridylate_kinase"/>
</dbReference>
<dbReference type="InterPro" id="IPR041739">
    <property type="entry name" value="G5K_ProB"/>
</dbReference>
<dbReference type="InterPro" id="IPR001057">
    <property type="entry name" value="Glu/AcGlu_kinase"/>
</dbReference>
<dbReference type="InterPro" id="IPR011529">
    <property type="entry name" value="Glu_5kinase"/>
</dbReference>
<dbReference type="InterPro" id="IPR005715">
    <property type="entry name" value="Glu_5kinase/COase_Synthase"/>
</dbReference>
<dbReference type="InterPro" id="IPR019797">
    <property type="entry name" value="Glutamate_5-kinase_CS"/>
</dbReference>
<dbReference type="InterPro" id="IPR002478">
    <property type="entry name" value="PUA"/>
</dbReference>
<dbReference type="InterPro" id="IPR015947">
    <property type="entry name" value="PUA-like_sf"/>
</dbReference>
<dbReference type="InterPro" id="IPR036974">
    <property type="entry name" value="PUA_sf"/>
</dbReference>
<dbReference type="NCBIfam" id="TIGR01027">
    <property type="entry name" value="proB"/>
    <property type="match status" value="1"/>
</dbReference>
<dbReference type="PANTHER" id="PTHR43654">
    <property type="entry name" value="GLUTAMATE 5-KINASE"/>
    <property type="match status" value="1"/>
</dbReference>
<dbReference type="PANTHER" id="PTHR43654:SF3">
    <property type="entry name" value="GLUTAMATE 5-KINASE"/>
    <property type="match status" value="1"/>
</dbReference>
<dbReference type="Pfam" id="PF00696">
    <property type="entry name" value="AA_kinase"/>
    <property type="match status" value="1"/>
</dbReference>
<dbReference type="Pfam" id="PF01472">
    <property type="entry name" value="PUA"/>
    <property type="match status" value="1"/>
</dbReference>
<dbReference type="PIRSF" id="PIRSF000729">
    <property type="entry name" value="GK"/>
    <property type="match status" value="1"/>
</dbReference>
<dbReference type="PRINTS" id="PR00474">
    <property type="entry name" value="GLU5KINASE"/>
</dbReference>
<dbReference type="SMART" id="SM00359">
    <property type="entry name" value="PUA"/>
    <property type="match status" value="1"/>
</dbReference>
<dbReference type="SUPFAM" id="SSF53633">
    <property type="entry name" value="Carbamate kinase-like"/>
    <property type="match status" value="1"/>
</dbReference>
<dbReference type="SUPFAM" id="SSF88697">
    <property type="entry name" value="PUA domain-like"/>
    <property type="match status" value="1"/>
</dbReference>
<dbReference type="PROSITE" id="PS00902">
    <property type="entry name" value="GLUTAMATE_5_KINASE"/>
    <property type="match status" value="1"/>
</dbReference>
<dbReference type="PROSITE" id="PS50890">
    <property type="entry name" value="PUA"/>
    <property type="match status" value="1"/>
</dbReference>
<name>PROB_SYNP6</name>
<sequence>MAPMSETLVVKIGTSSLTNPHHPGLALSTIAGLVEVICQLRRQGYNVVLVSSGAVGVGCTRLGLRDRPSRIAQRQAIAAVGQGRLMRTYDDLFTTLGQPIAQVLLTRGDLAQRQRYINAYQTFQELFELGVVPIVNENDTVAVEELKFGDNDTLSALVASLVEAQWLFLLTDVDRLYTADPRQDPNAKPITIVHDLSELESIQAGGQGSRWGTGGMATKLTAAKIATQASVRTVITQGRSPENLLKILAGEAIGTWFEPQPETVNARKRWIAHGLVPTGKLLLDAGAVQAIQAGGKSLLAAGIQAIEGDFEAQDAVQLCDLNGTEIARGLVNYDSHELQQIRGCQSDQIVQILGYEGAETIVHRDNLVLS</sequence>
<keyword id="KW-0028">Amino-acid biosynthesis</keyword>
<keyword id="KW-0067">ATP-binding</keyword>
<keyword id="KW-0963">Cytoplasm</keyword>
<keyword id="KW-0418">Kinase</keyword>
<keyword id="KW-0547">Nucleotide-binding</keyword>
<keyword id="KW-0641">Proline biosynthesis</keyword>
<keyword id="KW-0808">Transferase</keyword>
<proteinExistence type="inferred from homology"/>
<accession>Q5N0T0</accession>
<reference key="1">
    <citation type="journal article" date="2007" name="Photosyn. Res.">
        <title>Complete nucleotide sequence of the freshwater unicellular cyanobacterium Synechococcus elongatus PCC 6301 chromosome: gene content and organization.</title>
        <authorList>
            <person name="Sugita C."/>
            <person name="Ogata K."/>
            <person name="Shikata M."/>
            <person name="Jikuya H."/>
            <person name="Takano J."/>
            <person name="Furumichi M."/>
            <person name="Kanehisa M."/>
            <person name="Omata T."/>
            <person name="Sugiura M."/>
            <person name="Sugita M."/>
        </authorList>
    </citation>
    <scope>NUCLEOTIDE SEQUENCE [LARGE SCALE GENOMIC DNA]</scope>
    <source>
        <strain>ATCC 27144 / PCC 6301 / SAUG 1402/1</strain>
    </source>
</reference>
<organism>
    <name type="scientific">Synechococcus sp. (strain ATCC 27144 / PCC 6301 / SAUG 1402/1)</name>
    <name type="common">Anacystis nidulans</name>
    <dbReference type="NCBI Taxonomy" id="269084"/>
    <lineage>
        <taxon>Bacteria</taxon>
        <taxon>Bacillati</taxon>
        <taxon>Cyanobacteriota</taxon>
        <taxon>Cyanophyceae</taxon>
        <taxon>Synechococcales</taxon>
        <taxon>Synechococcaceae</taxon>
        <taxon>Synechococcus</taxon>
    </lineage>
</organism>